<keyword id="KW-0090">Biological rhythms</keyword>
<keyword id="KW-0175">Coiled coil</keyword>
<keyword id="KW-0539">Nucleus</keyword>
<keyword id="KW-1185">Reference proteome</keyword>
<dbReference type="EMBL" id="CM000134">
    <property type="protein sequence ID" value="EEC84953.1"/>
    <property type="molecule type" value="Genomic_DNA"/>
</dbReference>
<dbReference type="SMR" id="B8BDW1"/>
<dbReference type="STRING" id="39946.B8BDW1"/>
<dbReference type="iPTMnet" id="B8BDW1"/>
<dbReference type="EnsemblPlants" id="BGIOSGA031154-TA">
    <property type="protein sequence ID" value="BGIOSGA031154-PA"/>
    <property type="gene ID" value="BGIOSGA031154"/>
</dbReference>
<dbReference type="EnsemblPlants" id="OsGoSa_09g0017660.01">
    <property type="protein sequence ID" value="OsGoSa_09g0017660.01"/>
    <property type="gene ID" value="OsGoSa_09g0017660"/>
</dbReference>
<dbReference type="EnsemblPlants" id="OsIR64_09g0017820.02">
    <property type="protein sequence ID" value="OsIR64_09g0017820.02"/>
    <property type="gene ID" value="OsIR64_09g0017820"/>
</dbReference>
<dbReference type="EnsemblPlants" id="OsKYG_09g0017630.01">
    <property type="protein sequence ID" value="OsKYG_09g0017630.01"/>
    <property type="gene ID" value="OsKYG_09g0017630"/>
</dbReference>
<dbReference type="EnsemblPlants" id="OsLaMu_09g0017730.02">
    <property type="protein sequence ID" value="OsLaMu_09g0017730.02"/>
    <property type="gene ID" value="OsLaMu_09g0017730"/>
</dbReference>
<dbReference type="EnsemblPlants" id="OsLima_09g0017880.01">
    <property type="protein sequence ID" value="OsLima_09g0017880.01"/>
    <property type="gene ID" value="OsLima_09g0017880"/>
</dbReference>
<dbReference type="EnsemblPlants" id="OsLiXu_09g0017610.01">
    <property type="protein sequence ID" value="OsLiXu_09g0017610.01"/>
    <property type="gene ID" value="OsLiXu_09g0017610"/>
</dbReference>
<dbReference type="EnsemblPlants" id="OsMH63_09G018180_01">
    <property type="protein sequence ID" value="OsMH63_09G018180_01"/>
    <property type="gene ID" value="OsMH63_09G018180"/>
</dbReference>
<dbReference type="EnsemblPlants" id="OsPr106_09g0017980.02">
    <property type="protein sequence ID" value="OsPr106_09g0017980.02"/>
    <property type="gene ID" value="OsPr106_09g0017980"/>
</dbReference>
<dbReference type="EnsemblPlants" id="OsZS97_09G017830_01">
    <property type="protein sequence ID" value="OsZS97_09G017830_01"/>
    <property type="gene ID" value="OsZS97_09G017830"/>
</dbReference>
<dbReference type="Gramene" id="BGIOSGA031154-TA">
    <property type="protein sequence ID" value="BGIOSGA031154-PA"/>
    <property type="gene ID" value="BGIOSGA031154"/>
</dbReference>
<dbReference type="Gramene" id="OsGoSa_09g0017660.01">
    <property type="protein sequence ID" value="OsGoSa_09g0017660.01"/>
    <property type="gene ID" value="OsGoSa_09g0017660"/>
</dbReference>
<dbReference type="Gramene" id="OsIR64_09g0017820.02">
    <property type="protein sequence ID" value="OsIR64_09g0017820.02"/>
    <property type="gene ID" value="OsIR64_09g0017820"/>
</dbReference>
<dbReference type="Gramene" id="OsKYG_09g0017630.01">
    <property type="protein sequence ID" value="OsKYG_09g0017630.01"/>
    <property type="gene ID" value="OsKYG_09g0017630"/>
</dbReference>
<dbReference type="Gramene" id="OsLaMu_09g0017730.02">
    <property type="protein sequence ID" value="OsLaMu_09g0017730.02"/>
    <property type="gene ID" value="OsLaMu_09g0017730"/>
</dbReference>
<dbReference type="Gramene" id="OsLima_09g0017880.01">
    <property type="protein sequence ID" value="OsLima_09g0017880.01"/>
    <property type="gene ID" value="OsLima_09g0017880"/>
</dbReference>
<dbReference type="Gramene" id="OsLiXu_09g0017610.01">
    <property type="protein sequence ID" value="OsLiXu_09g0017610.01"/>
    <property type="gene ID" value="OsLiXu_09g0017610"/>
</dbReference>
<dbReference type="Gramene" id="OsMH63_09G018180_01">
    <property type="protein sequence ID" value="OsMH63_09G018180_01"/>
    <property type="gene ID" value="OsMH63_09G018180"/>
</dbReference>
<dbReference type="Gramene" id="OsPr106_09g0017980.02">
    <property type="protein sequence ID" value="OsPr106_09g0017980.02"/>
    <property type="gene ID" value="OsPr106_09g0017980"/>
</dbReference>
<dbReference type="Gramene" id="OsZS97_09G017830_01">
    <property type="protein sequence ID" value="OsZS97_09G017830_01"/>
    <property type="gene ID" value="OsZS97_09G017830"/>
</dbReference>
<dbReference type="HOGENOM" id="CLU_037985_1_1_1"/>
<dbReference type="OMA" id="DFIWVFL"/>
<dbReference type="OrthoDB" id="1562195at2759"/>
<dbReference type="Proteomes" id="UP000007015">
    <property type="component" value="Chromosome 9"/>
</dbReference>
<dbReference type="GO" id="GO:0005634">
    <property type="term" value="C:nucleus"/>
    <property type="evidence" value="ECO:0007669"/>
    <property type="project" value="UniProtKB-SubCell"/>
</dbReference>
<dbReference type="GO" id="GO:0006325">
    <property type="term" value="P:chromatin organization"/>
    <property type="evidence" value="ECO:0007669"/>
    <property type="project" value="TreeGrafter"/>
</dbReference>
<dbReference type="GO" id="GO:0009873">
    <property type="term" value="P:ethylene-activated signaling pathway"/>
    <property type="evidence" value="ECO:0007669"/>
    <property type="project" value="EnsemblPlants"/>
</dbReference>
<dbReference type="GO" id="GO:0035196">
    <property type="term" value="P:miRNA processing"/>
    <property type="evidence" value="ECO:0007669"/>
    <property type="project" value="EnsemblPlants"/>
</dbReference>
<dbReference type="GO" id="GO:0042752">
    <property type="term" value="P:regulation of circadian rhythm"/>
    <property type="evidence" value="ECO:0007669"/>
    <property type="project" value="EnsemblPlants"/>
</dbReference>
<dbReference type="GO" id="GO:0010099">
    <property type="term" value="P:regulation of photomorphogenesis"/>
    <property type="evidence" value="ECO:0007669"/>
    <property type="project" value="EnsemblPlants"/>
</dbReference>
<dbReference type="GO" id="GO:0009637">
    <property type="term" value="P:response to blue light"/>
    <property type="evidence" value="ECO:0007669"/>
    <property type="project" value="EnsemblPlants"/>
</dbReference>
<dbReference type="GO" id="GO:0010114">
    <property type="term" value="P:response to red light"/>
    <property type="evidence" value="ECO:0007669"/>
    <property type="project" value="EnsemblPlants"/>
</dbReference>
<dbReference type="GO" id="GO:0048511">
    <property type="term" value="P:rhythmic process"/>
    <property type="evidence" value="ECO:0007669"/>
    <property type="project" value="UniProtKB-KW"/>
</dbReference>
<dbReference type="InterPro" id="IPR048337">
    <property type="entry name" value="FAM50A/XAP5_C"/>
</dbReference>
<dbReference type="InterPro" id="IPR007005">
    <property type="entry name" value="XAP5"/>
</dbReference>
<dbReference type="PANTHER" id="PTHR12722:SF0">
    <property type="entry name" value="PROTEIN FAM50A"/>
    <property type="match status" value="1"/>
</dbReference>
<dbReference type="PANTHER" id="PTHR12722">
    <property type="entry name" value="XAP-5 PROTEIN-RELATED"/>
    <property type="match status" value="1"/>
</dbReference>
<dbReference type="Pfam" id="PF04921">
    <property type="entry name" value="XAP5"/>
    <property type="match status" value="1"/>
</dbReference>
<name>XCT_ORYSI</name>
<gene>
    <name type="primary">XCT</name>
    <name type="ORF">OsI_32174</name>
</gene>
<accession>B8BDW1</accession>
<sequence>MSGFGDGYVGTAQDAVKIRRLEKQREAERRKIEELKNKSSDGQPGLLQFGSSTSEILETAFKKETVGLVTREQYVEKRVNIRTKIEEEEKEKLQKLQQEEEELQMQKRKKRRVRGDPRLSFCDEIENGSDEDEFENQEPQKKHGPVKLGKDPTVETSFLPDREREAEEQAERERLKKQWSREQELIKNEPLTITYSYWDGTGHRRVIQVRKGDSIGEFLRAVQQQLAPEFREVRTTSVENLLYVKEDLIIPHQHSFYELIINKARGKSGPLFHFDVHEDVRTIADATKEKDESHAGKVVERHWYEKNKHIFPASRWEIYDPTKKWERYTIHGD</sequence>
<comment type="function">
    <text evidence="1">Involved in light regulation of the circadian clock and photomorphogenesis.</text>
</comment>
<comment type="subcellular location">
    <subcellularLocation>
        <location evidence="1">Nucleus</location>
    </subcellularLocation>
</comment>
<comment type="similarity">
    <text evidence="4">Belongs to the FAM50 family.</text>
</comment>
<organism>
    <name type="scientific">Oryza sativa subsp. indica</name>
    <name type="common">Rice</name>
    <dbReference type="NCBI Taxonomy" id="39946"/>
    <lineage>
        <taxon>Eukaryota</taxon>
        <taxon>Viridiplantae</taxon>
        <taxon>Streptophyta</taxon>
        <taxon>Embryophyta</taxon>
        <taxon>Tracheophyta</taxon>
        <taxon>Spermatophyta</taxon>
        <taxon>Magnoliopsida</taxon>
        <taxon>Liliopsida</taxon>
        <taxon>Poales</taxon>
        <taxon>Poaceae</taxon>
        <taxon>BOP clade</taxon>
        <taxon>Oryzoideae</taxon>
        <taxon>Oryzeae</taxon>
        <taxon>Oryzinae</taxon>
        <taxon>Oryza</taxon>
        <taxon>Oryza sativa</taxon>
    </lineage>
</organism>
<proteinExistence type="inferred from homology"/>
<feature type="chain" id="PRO_0000388468" description="Protein XAP5 CIRCADIAN TIMEKEEPER">
    <location>
        <begin position="1"/>
        <end position="333"/>
    </location>
</feature>
<feature type="region of interest" description="Disordered" evidence="3">
    <location>
        <begin position="89"/>
        <end position="171"/>
    </location>
</feature>
<feature type="coiled-coil region" evidence="2">
    <location>
        <begin position="12"/>
        <end position="43"/>
    </location>
</feature>
<feature type="coiled-coil region" evidence="2">
    <location>
        <begin position="70"/>
        <end position="116"/>
    </location>
</feature>
<feature type="compositionally biased region" description="Basic and acidic residues" evidence="3">
    <location>
        <begin position="89"/>
        <end position="98"/>
    </location>
</feature>
<feature type="compositionally biased region" description="Acidic residues" evidence="3">
    <location>
        <begin position="123"/>
        <end position="136"/>
    </location>
</feature>
<feature type="compositionally biased region" description="Basic and acidic residues" evidence="3">
    <location>
        <begin position="160"/>
        <end position="171"/>
    </location>
</feature>
<protein>
    <recommendedName>
        <fullName>Protein XAP5 CIRCADIAN TIMEKEEPER</fullName>
    </recommendedName>
</protein>
<reference key="1">
    <citation type="journal article" date="2005" name="PLoS Biol.">
        <title>The genomes of Oryza sativa: a history of duplications.</title>
        <authorList>
            <person name="Yu J."/>
            <person name="Wang J."/>
            <person name="Lin W."/>
            <person name="Li S."/>
            <person name="Li H."/>
            <person name="Zhou J."/>
            <person name="Ni P."/>
            <person name="Dong W."/>
            <person name="Hu S."/>
            <person name="Zeng C."/>
            <person name="Zhang J."/>
            <person name="Zhang Y."/>
            <person name="Li R."/>
            <person name="Xu Z."/>
            <person name="Li S."/>
            <person name="Li X."/>
            <person name="Zheng H."/>
            <person name="Cong L."/>
            <person name="Lin L."/>
            <person name="Yin J."/>
            <person name="Geng J."/>
            <person name="Li G."/>
            <person name="Shi J."/>
            <person name="Liu J."/>
            <person name="Lv H."/>
            <person name="Li J."/>
            <person name="Wang J."/>
            <person name="Deng Y."/>
            <person name="Ran L."/>
            <person name="Shi X."/>
            <person name="Wang X."/>
            <person name="Wu Q."/>
            <person name="Li C."/>
            <person name="Ren X."/>
            <person name="Wang J."/>
            <person name="Wang X."/>
            <person name="Li D."/>
            <person name="Liu D."/>
            <person name="Zhang X."/>
            <person name="Ji Z."/>
            <person name="Zhao W."/>
            <person name="Sun Y."/>
            <person name="Zhang Z."/>
            <person name="Bao J."/>
            <person name="Han Y."/>
            <person name="Dong L."/>
            <person name="Ji J."/>
            <person name="Chen P."/>
            <person name="Wu S."/>
            <person name="Liu J."/>
            <person name="Xiao Y."/>
            <person name="Bu D."/>
            <person name="Tan J."/>
            <person name="Yang L."/>
            <person name="Ye C."/>
            <person name="Zhang J."/>
            <person name="Xu J."/>
            <person name="Zhou Y."/>
            <person name="Yu Y."/>
            <person name="Zhang B."/>
            <person name="Zhuang S."/>
            <person name="Wei H."/>
            <person name="Liu B."/>
            <person name="Lei M."/>
            <person name="Yu H."/>
            <person name="Li Y."/>
            <person name="Xu H."/>
            <person name="Wei S."/>
            <person name="He X."/>
            <person name="Fang L."/>
            <person name="Zhang Z."/>
            <person name="Zhang Y."/>
            <person name="Huang X."/>
            <person name="Su Z."/>
            <person name="Tong W."/>
            <person name="Li J."/>
            <person name="Tong Z."/>
            <person name="Li S."/>
            <person name="Ye J."/>
            <person name="Wang L."/>
            <person name="Fang L."/>
            <person name="Lei T."/>
            <person name="Chen C.-S."/>
            <person name="Chen H.-C."/>
            <person name="Xu Z."/>
            <person name="Li H."/>
            <person name="Huang H."/>
            <person name="Zhang F."/>
            <person name="Xu H."/>
            <person name="Li N."/>
            <person name="Zhao C."/>
            <person name="Li S."/>
            <person name="Dong L."/>
            <person name="Huang Y."/>
            <person name="Li L."/>
            <person name="Xi Y."/>
            <person name="Qi Q."/>
            <person name="Li W."/>
            <person name="Zhang B."/>
            <person name="Hu W."/>
            <person name="Zhang Y."/>
            <person name="Tian X."/>
            <person name="Jiao Y."/>
            <person name="Liang X."/>
            <person name="Jin J."/>
            <person name="Gao L."/>
            <person name="Zheng W."/>
            <person name="Hao B."/>
            <person name="Liu S.-M."/>
            <person name="Wang W."/>
            <person name="Yuan L."/>
            <person name="Cao M."/>
            <person name="McDermott J."/>
            <person name="Samudrala R."/>
            <person name="Wang J."/>
            <person name="Wong G.K.-S."/>
            <person name="Yang H."/>
        </authorList>
    </citation>
    <scope>NUCLEOTIDE SEQUENCE [LARGE SCALE GENOMIC DNA]</scope>
    <source>
        <strain>cv. 93-11</strain>
    </source>
</reference>
<evidence type="ECO:0000250" key="1"/>
<evidence type="ECO:0000255" key="2"/>
<evidence type="ECO:0000256" key="3">
    <source>
        <dbReference type="SAM" id="MobiDB-lite"/>
    </source>
</evidence>
<evidence type="ECO:0000305" key="4"/>